<gene>
    <name evidence="1" type="primary">katG</name>
    <name type="ordered locus">Maqu_1056</name>
</gene>
<organism>
    <name type="scientific">Marinobacter nauticus (strain ATCC 700491 / DSM 11845 / VT8)</name>
    <name type="common">Marinobacter aquaeolei</name>
    <dbReference type="NCBI Taxonomy" id="351348"/>
    <lineage>
        <taxon>Bacteria</taxon>
        <taxon>Pseudomonadati</taxon>
        <taxon>Pseudomonadota</taxon>
        <taxon>Gammaproteobacteria</taxon>
        <taxon>Pseudomonadales</taxon>
        <taxon>Marinobacteraceae</taxon>
        <taxon>Marinobacter</taxon>
    </lineage>
</organism>
<evidence type="ECO:0000255" key="1">
    <source>
        <dbReference type="HAMAP-Rule" id="MF_01961"/>
    </source>
</evidence>
<comment type="function">
    <text evidence="1">Bifunctional enzyme with both catalase and broad-spectrum peroxidase activity.</text>
</comment>
<comment type="catalytic activity">
    <reaction evidence="1">
        <text>H2O2 + AH2 = A + 2 H2O</text>
        <dbReference type="Rhea" id="RHEA:30275"/>
        <dbReference type="ChEBI" id="CHEBI:13193"/>
        <dbReference type="ChEBI" id="CHEBI:15377"/>
        <dbReference type="ChEBI" id="CHEBI:16240"/>
        <dbReference type="ChEBI" id="CHEBI:17499"/>
        <dbReference type="EC" id="1.11.1.21"/>
    </reaction>
</comment>
<comment type="catalytic activity">
    <reaction evidence="1">
        <text>2 H2O2 = O2 + 2 H2O</text>
        <dbReference type="Rhea" id="RHEA:20309"/>
        <dbReference type="ChEBI" id="CHEBI:15377"/>
        <dbReference type="ChEBI" id="CHEBI:15379"/>
        <dbReference type="ChEBI" id="CHEBI:16240"/>
        <dbReference type="EC" id="1.11.1.21"/>
    </reaction>
</comment>
<comment type="cofactor">
    <cofactor evidence="1">
        <name>heme b</name>
        <dbReference type="ChEBI" id="CHEBI:60344"/>
    </cofactor>
    <text evidence="1">Binds 1 heme b (iron(II)-protoporphyrin IX) group per dimer.</text>
</comment>
<comment type="subunit">
    <text evidence="1">Homodimer or homotetramer.</text>
</comment>
<comment type="PTM">
    <text evidence="1">Formation of the three residue Trp-Tyr-Met cross-link is important for the catalase, but not the peroxidase activity of the enzyme.</text>
</comment>
<comment type="similarity">
    <text evidence="1">Belongs to the peroxidase family. Peroxidase/catalase subfamily.</text>
</comment>
<keyword id="KW-0349">Heme</keyword>
<keyword id="KW-0376">Hydrogen peroxide</keyword>
<keyword id="KW-0408">Iron</keyword>
<keyword id="KW-0479">Metal-binding</keyword>
<keyword id="KW-0560">Oxidoreductase</keyword>
<keyword id="KW-0575">Peroxidase</keyword>
<name>KATG_MARN8</name>
<reference key="1">
    <citation type="journal article" date="2011" name="Appl. Environ. Microbiol.">
        <title>Genomic potential of Marinobacter aquaeolei, a biogeochemical 'opportunitroph'.</title>
        <authorList>
            <person name="Singer E."/>
            <person name="Webb E.A."/>
            <person name="Nelson W.C."/>
            <person name="Heidelberg J.F."/>
            <person name="Ivanova N."/>
            <person name="Pati A."/>
            <person name="Edwards K.J."/>
        </authorList>
    </citation>
    <scope>NUCLEOTIDE SEQUENCE [LARGE SCALE GENOMIC DNA]</scope>
    <source>
        <strain>ATCC 700491 / DSM 11845 / VT8</strain>
    </source>
</reference>
<sequence length="723" mass="80764">MSETNSGGKCPVMHGANSTENRDVMNWWPEALNLDILHQHDHKTNPMGEDFDYREEVKKLDFEAVKKDLHALMTDSQDWWPADWGHYGGLMIRMSWHAAGTYRIQDGRGGGGTGNQRFAPLNSWPDNVSLDKARRLLWPIKKKYGNKLSWADLIILAGTVAYESMGLPSYGFSFGREDIWHPEKDIYWGNEKEWLAPSDERYGDVEKPDTMENPLAAVQMGLIYVNPEGVNSQPDPIKTGEQVRVTFARMAMDDEETAALTAGGHTVGKCHGNGDAGALGPEPEAADVEEQGFGWSNPNMKGKAANAVTSGIEGAWTTHPTKFDMGYFDLLFGYEWELKKSPAGAWQWEPINMKEEDKPLDASDPSKRHNPIMTDADMAMKMDPKYRAICEKFMADPEYFKDCFARAWFKLTHRDLGPKARYIGPEAPAEDLIWQDPVPAGSTDYCEEVVKEKVADSGLSISEMVSTAWDSARTFRGSDMRGGANGARIRLAPQKDWEGNEPARLSKVLKVYEQISAETGASVADVIVLAGSVGIEKAAKAAGYEVRVPFLKGRGDATDEMTDAPSFEYLEPVADGFRNWQKKDYIVKPEELLLDRAQLMGLTAPEMTVLIGGMRVLGTNHGGTKYGVFTDREGQLTNDFFVNLTDMAYSWKPVGNGTYEIRDRKTDQTKWTASRVDLVFGSNSILRSYAEVYAQDDNGEKFVKDFIAAWTKVMNNDRFDVQA</sequence>
<proteinExistence type="inferred from homology"/>
<dbReference type="EC" id="1.11.1.21" evidence="1"/>
<dbReference type="EMBL" id="CP000514">
    <property type="protein sequence ID" value="ABM18148.1"/>
    <property type="molecule type" value="Genomic_DNA"/>
</dbReference>
<dbReference type="RefSeq" id="WP_011784566.1">
    <property type="nucleotide sequence ID" value="NC_008740.1"/>
</dbReference>
<dbReference type="SMR" id="A1TZH9"/>
<dbReference type="STRING" id="351348.Maqu_1056"/>
<dbReference type="PeroxiBase" id="3563">
    <property type="entry name" value="MaqCP01_VT8"/>
</dbReference>
<dbReference type="KEGG" id="maq:Maqu_1056"/>
<dbReference type="eggNOG" id="COG0376">
    <property type="taxonomic scope" value="Bacteria"/>
</dbReference>
<dbReference type="HOGENOM" id="CLU_025424_2_0_6"/>
<dbReference type="OrthoDB" id="9759743at2"/>
<dbReference type="Proteomes" id="UP000000998">
    <property type="component" value="Chromosome"/>
</dbReference>
<dbReference type="GO" id="GO:0005829">
    <property type="term" value="C:cytosol"/>
    <property type="evidence" value="ECO:0007669"/>
    <property type="project" value="TreeGrafter"/>
</dbReference>
<dbReference type="GO" id="GO:0004096">
    <property type="term" value="F:catalase activity"/>
    <property type="evidence" value="ECO:0007669"/>
    <property type="project" value="UniProtKB-UniRule"/>
</dbReference>
<dbReference type="GO" id="GO:0020037">
    <property type="term" value="F:heme binding"/>
    <property type="evidence" value="ECO:0007669"/>
    <property type="project" value="InterPro"/>
</dbReference>
<dbReference type="GO" id="GO:0046872">
    <property type="term" value="F:metal ion binding"/>
    <property type="evidence" value="ECO:0007669"/>
    <property type="project" value="UniProtKB-KW"/>
</dbReference>
<dbReference type="GO" id="GO:0070301">
    <property type="term" value="P:cellular response to hydrogen peroxide"/>
    <property type="evidence" value="ECO:0007669"/>
    <property type="project" value="TreeGrafter"/>
</dbReference>
<dbReference type="GO" id="GO:0042744">
    <property type="term" value="P:hydrogen peroxide catabolic process"/>
    <property type="evidence" value="ECO:0007669"/>
    <property type="project" value="UniProtKB-KW"/>
</dbReference>
<dbReference type="CDD" id="cd00649">
    <property type="entry name" value="catalase_peroxidase_1"/>
    <property type="match status" value="1"/>
</dbReference>
<dbReference type="CDD" id="cd08200">
    <property type="entry name" value="catalase_peroxidase_2"/>
    <property type="match status" value="1"/>
</dbReference>
<dbReference type="FunFam" id="1.10.420.10:FF:000004">
    <property type="entry name" value="Catalase-peroxidase"/>
    <property type="match status" value="1"/>
</dbReference>
<dbReference type="FunFam" id="1.10.520.10:FF:000002">
    <property type="entry name" value="Catalase-peroxidase"/>
    <property type="match status" value="1"/>
</dbReference>
<dbReference type="Gene3D" id="1.10.520.10">
    <property type="match status" value="2"/>
</dbReference>
<dbReference type="Gene3D" id="1.10.420.10">
    <property type="entry name" value="Peroxidase, domain 2"/>
    <property type="match status" value="2"/>
</dbReference>
<dbReference type="HAMAP" id="MF_01961">
    <property type="entry name" value="Catal_peroxid"/>
    <property type="match status" value="1"/>
</dbReference>
<dbReference type="InterPro" id="IPR000763">
    <property type="entry name" value="Catalase_peroxidase"/>
</dbReference>
<dbReference type="InterPro" id="IPR002016">
    <property type="entry name" value="Haem_peroxidase"/>
</dbReference>
<dbReference type="InterPro" id="IPR010255">
    <property type="entry name" value="Haem_peroxidase_sf"/>
</dbReference>
<dbReference type="InterPro" id="IPR019794">
    <property type="entry name" value="Peroxidases_AS"/>
</dbReference>
<dbReference type="NCBIfam" id="TIGR00198">
    <property type="entry name" value="cat_per_HPI"/>
    <property type="match status" value="1"/>
</dbReference>
<dbReference type="NCBIfam" id="NF011635">
    <property type="entry name" value="PRK15061.1"/>
    <property type="match status" value="1"/>
</dbReference>
<dbReference type="PANTHER" id="PTHR30555:SF6">
    <property type="entry name" value="CATALASE-PEROXIDASE"/>
    <property type="match status" value="1"/>
</dbReference>
<dbReference type="PANTHER" id="PTHR30555">
    <property type="entry name" value="HYDROPEROXIDASE I, BIFUNCTIONAL CATALASE-PEROXIDASE"/>
    <property type="match status" value="1"/>
</dbReference>
<dbReference type="Pfam" id="PF00141">
    <property type="entry name" value="peroxidase"/>
    <property type="match status" value="2"/>
</dbReference>
<dbReference type="PRINTS" id="PR00460">
    <property type="entry name" value="BPEROXIDASE"/>
</dbReference>
<dbReference type="PRINTS" id="PR00458">
    <property type="entry name" value="PEROXIDASE"/>
</dbReference>
<dbReference type="SUPFAM" id="SSF48113">
    <property type="entry name" value="Heme-dependent peroxidases"/>
    <property type="match status" value="2"/>
</dbReference>
<dbReference type="PROSITE" id="PS00436">
    <property type="entry name" value="PEROXIDASE_2"/>
    <property type="match status" value="1"/>
</dbReference>
<dbReference type="PROSITE" id="PS50873">
    <property type="entry name" value="PEROXIDASE_4"/>
    <property type="match status" value="1"/>
</dbReference>
<feature type="chain" id="PRO_0000354828" description="Catalase-peroxidase">
    <location>
        <begin position="1"/>
        <end position="723"/>
    </location>
</feature>
<feature type="active site" description="Proton acceptor" evidence="1">
    <location>
        <position position="97"/>
    </location>
</feature>
<feature type="binding site" description="axial binding residue" evidence="1">
    <location>
        <position position="265"/>
    </location>
    <ligand>
        <name>heme b</name>
        <dbReference type="ChEBI" id="CHEBI:60344"/>
    </ligand>
    <ligandPart>
        <name>Fe</name>
        <dbReference type="ChEBI" id="CHEBI:18248"/>
    </ligandPart>
</feature>
<feature type="site" description="Transition state stabilizer" evidence="1">
    <location>
        <position position="93"/>
    </location>
</feature>
<feature type="cross-link" description="Tryptophyl-tyrosyl-methioninium (Trp-Tyr) (with M-250)" evidence="1">
    <location>
        <begin position="96"/>
        <end position="224"/>
    </location>
</feature>
<feature type="cross-link" description="Tryptophyl-tyrosyl-methioninium (Tyr-Met) (with W-96)" evidence="1">
    <location>
        <begin position="224"/>
        <end position="250"/>
    </location>
</feature>
<accession>A1TZH9</accession>
<protein>
    <recommendedName>
        <fullName evidence="1">Catalase-peroxidase</fullName>
        <shortName evidence="1">CP</shortName>
        <ecNumber evidence="1">1.11.1.21</ecNumber>
    </recommendedName>
    <alternativeName>
        <fullName evidence="1">Peroxidase/catalase</fullName>
    </alternativeName>
</protein>